<name>RECF_STAAT</name>
<gene>
    <name evidence="1" type="primary">recF</name>
    <name type="ordered locus">USA300HOU_0004</name>
</gene>
<evidence type="ECO:0000255" key="1">
    <source>
        <dbReference type="HAMAP-Rule" id="MF_00365"/>
    </source>
</evidence>
<proteinExistence type="inferred from homology"/>
<comment type="function">
    <text evidence="1">The RecF protein is involved in DNA metabolism; it is required for DNA replication and normal SOS inducibility. RecF binds preferentially to single-stranded, linear DNA. It also seems to bind ATP.</text>
</comment>
<comment type="subcellular location">
    <subcellularLocation>
        <location evidence="1">Cytoplasm</location>
    </subcellularLocation>
</comment>
<comment type="similarity">
    <text evidence="1">Belongs to the RecF family.</text>
</comment>
<organism>
    <name type="scientific">Staphylococcus aureus (strain USA300 / TCH1516)</name>
    <dbReference type="NCBI Taxonomy" id="451516"/>
    <lineage>
        <taxon>Bacteria</taxon>
        <taxon>Bacillati</taxon>
        <taxon>Bacillota</taxon>
        <taxon>Bacilli</taxon>
        <taxon>Bacillales</taxon>
        <taxon>Staphylococcaceae</taxon>
        <taxon>Staphylococcus</taxon>
    </lineage>
</organism>
<protein>
    <recommendedName>
        <fullName evidence="1">DNA replication and repair protein RecF</fullName>
    </recommendedName>
</protein>
<reference key="1">
    <citation type="journal article" date="2007" name="BMC Microbiol.">
        <title>Subtle genetic changes enhance virulence of methicillin resistant and sensitive Staphylococcus aureus.</title>
        <authorList>
            <person name="Highlander S.K."/>
            <person name="Hulten K.G."/>
            <person name="Qin X."/>
            <person name="Jiang H."/>
            <person name="Yerrapragada S."/>
            <person name="Mason E.O. Jr."/>
            <person name="Shang Y."/>
            <person name="Williams T.M."/>
            <person name="Fortunov R.M."/>
            <person name="Liu Y."/>
            <person name="Igboeli O."/>
            <person name="Petrosino J."/>
            <person name="Tirumalai M."/>
            <person name="Uzman A."/>
            <person name="Fox G.E."/>
            <person name="Cardenas A.M."/>
            <person name="Muzny D.M."/>
            <person name="Hemphill L."/>
            <person name="Ding Y."/>
            <person name="Dugan S."/>
            <person name="Blyth P.R."/>
            <person name="Buhay C.J."/>
            <person name="Dinh H.H."/>
            <person name="Hawes A.C."/>
            <person name="Holder M."/>
            <person name="Kovar C.L."/>
            <person name="Lee S.L."/>
            <person name="Liu W."/>
            <person name="Nazareth L.V."/>
            <person name="Wang Q."/>
            <person name="Zhou J."/>
            <person name="Kaplan S.L."/>
            <person name="Weinstock G.M."/>
        </authorList>
    </citation>
    <scope>NUCLEOTIDE SEQUENCE [LARGE SCALE GENOMIC DNA]</scope>
    <source>
        <strain>USA300 / TCH1516</strain>
    </source>
</reference>
<keyword id="KW-0067">ATP-binding</keyword>
<keyword id="KW-0963">Cytoplasm</keyword>
<keyword id="KW-0227">DNA damage</keyword>
<keyword id="KW-0234">DNA repair</keyword>
<keyword id="KW-0235">DNA replication</keyword>
<keyword id="KW-0238">DNA-binding</keyword>
<keyword id="KW-0547">Nucleotide-binding</keyword>
<keyword id="KW-0742">SOS response</keyword>
<sequence>MKLNTLQLENYRNYDEVTLKCHPDVNILIGENAQGKTNLLESIYTLALAKSHRTSNDKELIRFNADYAKIEGELSYRHGTMPLTMFITKKGKQVKVNHLEQSRLTQYIGHLNVVLFAPEDLNIVKGSPQIRRRFIDMELGQISAVYLNDLAQYQRILKQKNNYLKQLQLGQKKDLTMLEVLNQQFAEYAMKVTDKRAHFIQELESLAKPIHAGITNDKEALSLNYLPSLKFDYAQNEAARLEEIMSILSDNMQREKERGISLFGPHRDDISFDVNGMDAQTYGSQGQQRTTALSIKLAEIELMNIEVGEYPILLLDDVLSELDDSRQTHLLSTIQHKVQTFVTTTSVDGIDHEIMNNAKLYRINQGEIIK</sequence>
<accession>A8YYS7</accession>
<feature type="chain" id="PRO_1000079610" description="DNA replication and repair protein RecF">
    <location>
        <begin position="1"/>
        <end position="370"/>
    </location>
</feature>
<feature type="binding site" evidence="1">
    <location>
        <begin position="30"/>
        <end position="37"/>
    </location>
    <ligand>
        <name>ATP</name>
        <dbReference type="ChEBI" id="CHEBI:30616"/>
    </ligand>
</feature>
<dbReference type="EMBL" id="CP000730">
    <property type="protein sequence ID" value="ABX28050.1"/>
    <property type="molecule type" value="Genomic_DNA"/>
</dbReference>
<dbReference type="RefSeq" id="WP_000775113.1">
    <property type="nucleotide sequence ID" value="NC_010079.1"/>
</dbReference>
<dbReference type="SMR" id="A8YYS7"/>
<dbReference type="KEGG" id="sax:USA300HOU_0004"/>
<dbReference type="HOGENOM" id="CLU_040267_0_1_9"/>
<dbReference type="GO" id="GO:0005737">
    <property type="term" value="C:cytoplasm"/>
    <property type="evidence" value="ECO:0007669"/>
    <property type="project" value="UniProtKB-SubCell"/>
</dbReference>
<dbReference type="GO" id="GO:0005524">
    <property type="term" value="F:ATP binding"/>
    <property type="evidence" value="ECO:0007669"/>
    <property type="project" value="UniProtKB-UniRule"/>
</dbReference>
<dbReference type="GO" id="GO:0003697">
    <property type="term" value="F:single-stranded DNA binding"/>
    <property type="evidence" value="ECO:0007669"/>
    <property type="project" value="UniProtKB-UniRule"/>
</dbReference>
<dbReference type="GO" id="GO:0006260">
    <property type="term" value="P:DNA replication"/>
    <property type="evidence" value="ECO:0007669"/>
    <property type="project" value="UniProtKB-UniRule"/>
</dbReference>
<dbReference type="GO" id="GO:0000731">
    <property type="term" value="P:DNA synthesis involved in DNA repair"/>
    <property type="evidence" value="ECO:0007669"/>
    <property type="project" value="TreeGrafter"/>
</dbReference>
<dbReference type="GO" id="GO:0006302">
    <property type="term" value="P:double-strand break repair"/>
    <property type="evidence" value="ECO:0007669"/>
    <property type="project" value="TreeGrafter"/>
</dbReference>
<dbReference type="GO" id="GO:0009432">
    <property type="term" value="P:SOS response"/>
    <property type="evidence" value="ECO:0007669"/>
    <property type="project" value="UniProtKB-UniRule"/>
</dbReference>
<dbReference type="CDD" id="cd03242">
    <property type="entry name" value="ABC_RecF"/>
    <property type="match status" value="1"/>
</dbReference>
<dbReference type="FunFam" id="1.20.1050.90:FF:000002">
    <property type="entry name" value="DNA replication and repair protein RecF"/>
    <property type="match status" value="1"/>
</dbReference>
<dbReference type="Gene3D" id="3.40.50.300">
    <property type="entry name" value="P-loop containing nucleotide triphosphate hydrolases"/>
    <property type="match status" value="1"/>
</dbReference>
<dbReference type="Gene3D" id="1.20.1050.90">
    <property type="entry name" value="RecF/RecN/SMC, N-terminal domain"/>
    <property type="match status" value="1"/>
</dbReference>
<dbReference type="HAMAP" id="MF_00365">
    <property type="entry name" value="RecF"/>
    <property type="match status" value="1"/>
</dbReference>
<dbReference type="InterPro" id="IPR001238">
    <property type="entry name" value="DNA-binding_RecF"/>
</dbReference>
<dbReference type="InterPro" id="IPR018078">
    <property type="entry name" value="DNA-binding_RecF_CS"/>
</dbReference>
<dbReference type="InterPro" id="IPR027417">
    <property type="entry name" value="P-loop_NTPase"/>
</dbReference>
<dbReference type="InterPro" id="IPR003395">
    <property type="entry name" value="RecF/RecN/SMC_N"/>
</dbReference>
<dbReference type="InterPro" id="IPR042174">
    <property type="entry name" value="RecF_2"/>
</dbReference>
<dbReference type="NCBIfam" id="TIGR00611">
    <property type="entry name" value="recf"/>
    <property type="match status" value="1"/>
</dbReference>
<dbReference type="PANTHER" id="PTHR32182">
    <property type="entry name" value="DNA REPLICATION AND REPAIR PROTEIN RECF"/>
    <property type="match status" value="1"/>
</dbReference>
<dbReference type="PANTHER" id="PTHR32182:SF0">
    <property type="entry name" value="DNA REPLICATION AND REPAIR PROTEIN RECF"/>
    <property type="match status" value="1"/>
</dbReference>
<dbReference type="Pfam" id="PF02463">
    <property type="entry name" value="SMC_N"/>
    <property type="match status" value="1"/>
</dbReference>
<dbReference type="SUPFAM" id="SSF52540">
    <property type="entry name" value="P-loop containing nucleoside triphosphate hydrolases"/>
    <property type="match status" value="1"/>
</dbReference>
<dbReference type="PROSITE" id="PS00617">
    <property type="entry name" value="RECF_1"/>
    <property type="match status" value="1"/>
</dbReference>
<dbReference type="PROSITE" id="PS00618">
    <property type="entry name" value="RECF_2"/>
    <property type="match status" value="1"/>
</dbReference>